<evidence type="ECO:0000255" key="1">
    <source>
        <dbReference type="HAMAP-Rule" id="MF_00183"/>
    </source>
</evidence>
<sequence length="398" mass="43347">MKQLTILGSTGSIGCSTLDVVRHNPEHFRVVALVAGKNVTRMVEQCLEFSPRYAVMDDEASAKLLKTMLQQQGSRTEVLSGQQAACDMAALEEVDQVMAAIVGAAGLLPTLAAIRAGKTILLANKESLVTCGRLFMDAVKQSKAQLLPVDSEHNAIFQSLPQPIQHNLGYADLEQNGVVSILLTGSGGPFRETPLRDLATMTPDQACRHPNWSMGRKISVDSATMMNKGLEYIEARWLFNASASQMEVLIHPQSVIHSMVRYQDGSVLAQLGEPDMRTPIAHTMAWPNRVNSGVKPLDFCKLSALTFAAPDYERYPCLKLAMEAFEQGQAATTALNAANEITVAAFLAQQIRFTDIAALNLSVLEKMDMREPQCVDDVLSVDANASEVARKEVMRLAS</sequence>
<organism>
    <name type="scientific">Shigella flexneri</name>
    <dbReference type="NCBI Taxonomy" id="623"/>
    <lineage>
        <taxon>Bacteria</taxon>
        <taxon>Pseudomonadati</taxon>
        <taxon>Pseudomonadota</taxon>
        <taxon>Gammaproteobacteria</taxon>
        <taxon>Enterobacterales</taxon>
        <taxon>Enterobacteriaceae</taxon>
        <taxon>Shigella</taxon>
    </lineage>
</organism>
<proteinExistence type="inferred from homology"/>
<accession>Q83MD3</accession>
<keyword id="KW-0414">Isoprene biosynthesis</keyword>
<keyword id="KW-0464">Manganese</keyword>
<keyword id="KW-0479">Metal-binding</keyword>
<keyword id="KW-0521">NADP</keyword>
<keyword id="KW-0560">Oxidoreductase</keyword>
<keyword id="KW-1185">Reference proteome</keyword>
<feature type="chain" id="PRO_0000163712" description="1-deoxy-D-xylulose 5-phosphate reductoisomerase">
    <location>
        <begin position="1"/>
        <end position="398"/>
    </location>
</feature>
<feature type="binding site" evidence="1">
    <location>
        <position position="10"/>
    </location>
    <ligand>
        <name>NADPH</name>
        <dbReference type="ChEBI" id="CHEBI:57783"/>
    </ligand>
</feature>
<feature type="binding site" evidence="1">
    <location>
        <position position="11"/>
    </location>
    <ligand>
        <name>NADPH</name>
        <dbReference type="ChEBI" id="CHEBI:57783"/>
    </ligand>
</feature>
<feature type="binding site" evidence="1">
    <location>
        <position position="12"/>
    </location>
    <ligand>
        <name>NADPH</name>
        <dbReference type="ChEBI" id="CHEBI:57783"/>
    </ligand>
</feature>
<feature type="binding site" evidence="1">
    <location>
        <position position="13"/>
    </location>
    <ligand>
        <name>NADPH</name>
        <dbReference type="ChEBI" id="CHEBI:57783"/>
    </ligand>
</feature>
<feature type="binding site" evidence="1">
    <location>
        <position position="36"/>
    </location>
    <ligand>
        <name>NADPH</name>
        <dbReference type="ChEBI" id="CHEBI:57783"/>
    </ligand>
</feature>
<feature type="binding site" evidence="1">
    <location>
        <position position="37"/>
    </location>
    <ligand>
        <name>NADPH</name>
        <dbReference type="ChEBI" id="CHEBI:57783"/>
    </ligand>
</feature>
<feature type="binding site" evidence="1">
    <location>
        <position position="38"/>
    </location>
    <ligand>
        <name>NADPH</name>
        <dbReference type="ChEBI" id="CHEBI:57783"/>
    </ligand>
</feature>
<feature type="binding site" evidence="1">
    <location>
        <position position="124"/>
    </location>
    <ligand>
        <name>NADPH</name>
        <dbReference type="ChEBI" id="CHEBI:57783"/>
    </ligand>
</feature>
<feature type="binding site" evidence="1">
    <location>
        <position position="125"/>
    </location>
    <ligand>
        <name>1-deoxy-D-xylulose 5-phosphate</name>
        <dbReference type="ChEBI" id="CHEBI:57792"/>
    </ligand>
</feature>
<feature type="binding site" evidence="1">
    <location>
        <position position="126"/>
    </location>
    <ligand>
        <name>NADPH</name>
        <dbReference type="ChEBI" id="CHEBI:57783"/>
    </ligand>
</feature>
<feature type="binding site" evidence="1">
    <location>
        <position position="150"/>
    </location>
    <ligand>
        <name>Mn(2+)</name>
        <dbReference type="ChEBI" id="CHEBI:29035"/>
    </ligand>
</feature>
<feature type="binding site" evidence="1">
    <location>
        <position position="151"/>
    </location>
    <ligand>
        <name>1-deoxy-D-xylulose 5-phosphate</name>
        <dbReference type="ChEBI" id="CHEBI:57792"/>
    </ligand>
</feature>
<feature type="binding site" evidence="1">
    <location>
        <position position="152"/>
    </location>
    <ligand>
        <name>1-deoxy-D-xylulose 5-phosphate</name>
        <dbReference type="ChEBI" id="CHEBI:57792"/>
    </ligand>
</feature>
<feature type="binding site" evidence="1">
    <location>
        <position position="152"/>
    </location>
    <ligand>
        <name>Mn(2+)</name>
        <dbReference type="ChEBI" id="CHEBI:29035"/>
    </ligand>
</feature>
<feature type="binding site" evidence="1">
    <location>
        <position position="186"/>
    </location>
    <ligand>
        <name>1-deoxy-D-xylulose 5-phosphate</name>
        <dbReference type="ChEBI" id="CHEBI:57792"/>
    </ligand>
</feature>
<feature type="binding site" evidence="1">
    <location>
        <position position="209"/>
    </location>
    <ligand>
        <name>1-deoxy-D-xylulose 5-phosphate</name>
        <dbReference type="ChEBI" id="CHEBI:57792"/>
    </ligand>
</feature>
<feature type="binding site" evidence="1">
    <location>
        <position position="215"/>
    </location>
    <ligand>
        <name>NADPH</name>
        <dbReference type="ChEBI" id="CHEBI:57783"/>
    </ligand>
</feature>
<feature type="binding site" evidence="1">
    <location>
        <position position="222"/>
    </location>
    <ligand>
        <name>1-deoxy-D-xylulose 5-phosphate</name>
        <dbReference type="ChEBI" id="CHEBI:57792"/>
    </ligand>
</feature>
<feature type="binding site" evidence="1">
    <location>
        <position position="227"/>
    </location>
    <ligand>
        <name>1-deoxy-D-xylulose 5-phosphate</name>
        <dbReference type="ChEBI" id="CHEBI:57792"/>
    </ligand>
</feature>
<feature type="binding site" evidence="1">
    <location>
        <position position="228"/>
    </location>
    <ligand>
        <name>1-deoxy-D-xylulose 5-phosphate</name>
        <dbReference type="ChEBI" id="CHEBI:57792"/>
    </ligand>
</feature>
<feature type="binding site" evidence="1">
    <location>
        <position position="231"/>
    </location>
    <ligand>
        <name>1-deoxy-D-xylulose 5-phosphate</name>
        <dbReference type="ChEBI" id="CHEBI:57792"/>
    </ligand>
</feature>
<feature type="binding site" evidence="1">
    <location>
        <position position="231"/>
    </location>
    <ligand>
        <name>Mn(2+)</name>
        <dbReference type="ChEBI" id="CHEBI:29035"/>
    </ligand>
</feature>
<gene>
    <name evidence="1" type="primary">dxr</name>
    <name type="ordered locus">SF0163</name>
    <name type="ordered locus">S0166</name>
</gene>
<dbReference type="EC" id="1.1.1.267" evidence="1"/>
<dbReference type="EMBL" id="AE005674">
    <property type="protein sequence ID" value="AAN41825.1"/>
    <property type="molecule type" value="Genomic_DNA"/>
</dbReference>
<dbReference type="EMBL" id="AE014073">
    <property type="protein sequence ID" value="AAP15706.1"/>
    <property type="molecule type" value="Genomic_DNA"/>
</dbReference>
<dbReference type="SMR" id="Q83MD3"/>
<dbReference type="STRING" id="198214.SF0163"/>
<dbReference type="PaxDb" id="198214-SF0163"/>
<dbReference type="KEGG" id="sfl:SF0163"/>
<dbReference type="KEGG" id="sfx:S0166"/>
<dbReference type="PATRIC" id="fig|198214.7.peg.184"/>
<dbReference type="HOGENOM" id="CLU_035714_4_0_6"/>
<dbReference type="UniPathway" id="UPA00056">
    <property type="reaction ID" value="UER00092"/>
</dbReference>
<dbReference type="Proteomes" id="UP000001006">
    <property type="component" value="Chromosome"/>
</dbReference>
<dbReference type="Proteomes" id="UP000002673">
    <property type="component" value="Chromosome"/>
</dbReference>
<dbReference type="GO" id="GO:0030604">
    <property type="term" value="F:1-deoxy-D-xylulose-5-phosphate reductoisomerase activity"/>
    <property type="evidence" value="ECO:0007669"/>
    <property type="project" value="UniProtKB-UniRule"/>
</dbReference>
<dbReference type="GO" id="GO:0030145">
    <property type="term" value="F:manganese ion binding"/>
    <property type="evidence" value="ECO:0007669"/>
    <property type="project" value="TreeGrafter"/>
</dbReference>
<dbReference type="GO" id="GO:0070402">
    <property type="term" value="F:NADPH binding"/>
    <property type="evidence" value="ECO:0007669"/>
    <property type="project" value="InterPro"/>
</dbReference>
<dbReference type="GO" id="GO:0051484">
    <property type="term" value="P:isopentenyl diphosphate biosynthetic process, methylerythritol 4-phosphate pathway involved in terpenoid biosynthetic process"/>
    <property type="evidence" value="ECO:0007669"/>
    <property type="project" value="TreeGrafter"/>
</dbReference>
<dbReference type="FunFam" id="1.10.1740.10:FF:000004">
    <property type="entry name" value="1-deoxy-D-xylulose 5-phosphate reductoisomerase"/>
    <property type="match status" value="1"/>
</dbReference>
<dbReference type="FunFam" id="3.40.50.720:FF:000045">
    <property type="entry name" value="1-deoxy-D-xylulose 5-phosphate reductoisomerase"/>
    <property type="match status" value="1"/>
</dbReference>
<dbReference type="Gene3D" id="1.10.1740.10">
    <property type="match status" value="1"/>
</dbReference>
<dbReference type="Gene3D" id="3.40.50.720">
    <property type="entry name" value="NAD(P)-binding Rossmann-like Domain"/>
    <property type="match status" value="1"/>
</dbReference>
<dbReference type="HAMAP" id="MF_00183">
    <property type="entry name" value="DXP_reductoisom"/>
    <property type="match status" value="1"/>
</dbReference>
<dbReference type="InterPro" id="IPR003821">
    <property type="entry name" value="DXP_reductoisomerase"/>
</dbReference>
<dbReference type="InterPro" id="IPR013644">
    <property type="entry name" value="DXP_reductoisomerase_C"/>
</dbReference>
<dbReference type="InterPro" id="IPR013512">
    <property type="entry name" value="DXP_reductoisomerase_N"/>
</dbReference>
<dbReference type="InterPro" id="IPR026877">
    <property type="entry name" value="DXPR_C"/>
</dbReference>
<dbReference type="InterPro" id="IPR036169">
    <property type="entry name" value="DXPR_C_sf"/>
</dbReference>
<dbReference type="InterPro" id="IPR036291">
    <property type="entry name" value="NAD(P)-bd_dom_sf"/>
</dbReference>
<dbReference type="NCBIfam" id="TIGR00243">
    <property type="entry name" value="Dxr"/>
    <property type="match status" value="1"/>
</dbReference>
<dbReference type="NCBIfam" id="NF003938">
    <property type="entry name" value="PRK05447.1-1"/>
    <property type="match status" value="1"/>
</dbReference>
<dbReference type="NCBIfam" id="NF009114">
    <property type="entry name" value="PRK12464.1"/>
    <property type="match status" value="1"/>
</dbReference>
<dbReference type="PANTHER" id="PTHR30525">
    <property type="entry name" value="1-DEOXY-D-XYLULOSE 5-PHOSPHATE REDUCTOISOMERASE"/>
    <property type="match status" value="1"/>
</dbReference>
<dbReference type="PANTHER" id="PTHR30525:SF0">
    <property type="entry name" value="1-DEOXY-D-XYLULOSE 5-PHOSPHATE REDUCTOISOMERASE, CHLOROPLASTIC"/>
    <property type="match status" value="1"/>
</dbReference>
<dbReference type="Pfam" id="PF08436">
    <property type="entry name" value="DXP_redisom_C"/>
    <property type="match status" value="1"/>
</dbReference>
<dbReference type="Pfam" id="PF02670">
    <property type="entry name" value="DXP_reductoisom"/>
    <property type="match status" value="1"/>
</dbReference>
<dbReference type="Pfam" id="PF13288">
    <property type="entry name" value="DXPR_C"/>
    <property type="match status" value="1"/>
</dbReference>
<dbReference type="PIRSF" id="PIRSF006205">
    <property type="entry name" value="Dxp_reductismrs"/>
    <property type="match status" value="1"/>
</dbReference>
<dbReference type="SUPFAM" id="SSF69055">
    <property type="entry name" value="1-deoxy-D-xylulose-5-phosphate reductoisomerase, C-terminal domain"/>
    <property type="match status" value="1"/>
</dbReference>
<dbReference type="SUPFAM" id="SSF55347">
    <property type="entry name" value="Glyceraldehyde-3-phosphate dehydrogenase-like, C-terminal domain"/>
    <property type="match status" value="1"/>
</dbReference>
<dbReference type="SUPFAM" id="SSF51735">
    <property type="entry name" value="NAD(P)-binding Rossmann-fold domains"/>
    <property type="match status" value="1"/>
</dbReference>
<comment type="function">
    <text evidence="1">Catalyzes the NADPH-dependent rearrangement and reduction of 1-deoxy-D-xylulose-5-phosphate (DXP) to 2-C-methyl-D-erythritol 4-phosphate (MEP).</text>
</comment>
<comment type="catalytic activity">
    <reaction evidence="1">
        <text>2-C-methyl-D-erythritol 4-phosphate + NADP(+) = 1-deoxy-D-xylulose 5-phosphate + NADPH + H(+)</text>
        <dbReference type="Rhea" id="RHEA:13717"/>
        <dbReference type="ChEBI" id="CHEBI:15378"/>
        <dbReference type="ChEBI" id="CHEBI:57783"/>
        <dbReference type="ChEBI" id="CHEBI:57792"/>
        <dbReference type="ChEBI" id="CHEBI:58262"/>
        <dbReference type="ChEBI" id="CHEBI:58349"/>
        <dbReference type="EC" id="1.1.1.267"/>
    </reaction>
    <physiologicalReaction direction="right-to-left" evidence="1">
        <dbReference type="Rhea" id="RHEA:13719"/>
    </physiologicalReaction>
</comment>
<comment type="cofactor">
    <cofactor evidence="1">
        <name>Mg(2+)</name>
        <dbReference type="ChEBI" id="CHEBI:18420"/>
    </cofactor>
    <cofactor evidence="1">
        <name>Mn(2+)</name>
        <dbReference type="ChEBI" id="CHEBI:29035"/>
    </cofactor>
</comment>
<comment type="pathway">
    <text evidence="1">Isoprenoid biosynthesis; isopentenyl diphosphate biosynthesis via DXP pathway; isopentenyl diphosphate from 1-deoxy-D-xylulose 5-phosphate: step 1/6.</text>
</comment>
<comment type="subunit">
    <text evidence="1">Homodimer.</text>
</comment>
<comment type="similarity">
    <text evidence="1">Belongs to the DXR family.</text>
</comment>
<reference key="1">
    <citation type="journal article" date="2002" name="Nucleic Acids Res.">
        <title>Genome sequence of Shigella flexneri 2a: insights into pathogenicity through comparison with genomes of Escherichia coli K12 and O157.</title>
        <authorList>
            <person name="Jin Q."/>
            <person name="Yuan Z."/>
            <person name="Xu J."/>
            <person name="Wang Y."/>
            <person name="Shen Y."/>
            <person name="Lu W."/>
            <person name="Wang J."/>
            <person name="Liu H."/>
            <person name="Yang J."/>
            <person name="Yang F."/>
            <person name="Zhang X."/>
            <person name="Zhang J."/>
            <person name="Yang G."/>
            <person name="Wu H."/>
            <person name="Qu D."/>
            <person name="Dong J."/>
            <person name="Sun L."/>
            <person name="Xue Y."/>
            <person name="Zhao A."/>
            <person name="Gao Y."/>
            <person name="Zhu J."/>
            <person name="Kan B."/>
            <person name="Ding K."/>
            <person name="Chen S."/>
            <person name="Cheng H."/>
            <person name="Yao Z."/>
            <person name="He B."/>
            <person name="Chen R."/>
            <person name="Ma D."/>
            <person name="Qiang B."/>
            <person name="Wen Y."/>
            <person name="Hou Y."/>
            <person name="Yu J."/>
        </authorList>
    </citation>
    <scope>NUCLEOTIDE SEQUENCE [LARGE SCALE GENOMIC DNA]</scope>
    <source>
        <strain>301 / Serotype 2a</strain>
    </source>
</reference>
<reference key="2">
    <citation type="journal article" date="2003" name="Infect. Immun.">
        <title>Complete genome sequence and comparative genomics of Shigella flexneri serotype 2a strain 2457T.</title>
        <authorList>
            <person name="Wei J."/>
            <person name="Goldberg M.B."/>
            <person name="Burland V."/>
            <person name="Venkatesan M.M."/>
            <person name="Deng W."/>
            <person name="Fournier G."/>
            <person name="Mayhew G.F."/>
            <person name="Plunkett G. III"/>
            <person name="Rose D.J."/>
            <person name="Darling A."/>
            <person name="Mau B."/>
            <person name="Perna N.T."/>
            <person name="Payne S.M."/>
            <person name="Runyen-Janecky L.J."/>
            <person name="Zhou S."/>
            <person name="Schwartz D.C."/>
            <person name="Blattner F.R."/>
        </authorList>
    </citation>
    <scope>NUCLEOTIDE SEQUENCE [LARGE SCALE GENOMIC DNA]</scope>
    <source>
        <strain>ATCC 700930 / 2457T / Serotype 2a</strain>
    </source>
</reference>
<name>DXR_SHIFL</name>
<protein>
    <recommendedName>
        <fullName evidence="1">1-deoxy-D-xylulose 5-phosphate reductoisomerase</fullName>
        <shortName evidence="1">DXP reductoisomerase</shortName>
        <ecNumber evidence="1">1.1.1.267</ecNumber>
    </recommendedName>
    <alternativeName>
        <fullName evidence="1">1-deoxyxylulose-5-phosphate reductoisomerase</fullName>
    </alternativeName>
    <alternativeName>
        <fullName evidence="1">2-C-methyl-D-erythritol 4-phosphate synthase</fullName>
    </alternativeName>
</protein>